<protein>
    <recommendedName>
        <fullName>Aldehyde dehydrogenase family 3 member B1</fullName>
        <ecNumber evidence="2">1.2.1.28</ecNumber>
        <ecNumber evidence="2">1.2.1.5</ecNumber>
        <ecNumber evidence="2">1.2.1.7</ecNumber>
    </recommendedName>
    <alternativeName>
        <fullName>Aldehyde dehydrogenase 7</fullName>
    </alternativeName>
    <alternativeName>
        <fullName>Long-chain fatty aldehyde dehydrogenase</fullName>
        <ecNumber evidence="2">1.2.1.48</ecNumber>
    </alternativeName>
    <alternativeName>
        <fullName>Medium-chain fatty aldehyde dehydrogenase</fullName>
    </alternativeName>
</protein>
<sequence length="468" mass="51800">MDPFADTLQRLREAFVSGRTRPAEFRDAQLKGLSRFLRENKQLLQEALAQDLHKSAFEAEVSEISISQNEINLALRNLRTWMKDEKVSKNLATQLDSAFIRKEPFGLVLILSPWNYPLNLSLGPLVGALAAGNCVVLKPSEISKNTEKVLAEVLPRYLDQSCFAVVLGGPQETGRLLEHKFDYIFFTGNPQVGKIVMTAAAKHLTPVTLELGGKNPCYVDDNCDPQTVANRVAFFRCFNAGQTCVAPDYVLCSPEMQAQLVPALQSAITRFYGDDPQSSPNLGRIISQKHFQRLRGLLSCGRVVIGGQSDECDLYIAPTVLVDVQETDPVMQEEIFGPILPIVNVRSLGQAIDFINRREKPLALYAFSNSSQVVKRVLAQTSSGGFCGNDGFMHLTLASLPFGGVGSSGMGNYHGKFSFDTFSHHRACLLRRPGLEKIYAIRYPPHTPRNLRVLLMAMETRSCSCTLL</sequence>
<reference key="1">
    <citation type="journal article" date="2005" name="BMC Genomics">
        <title>Characterization of 954 bovine full-CDS cDNA sequences.</title>
        <authorList>
            <person name="Harhay G.P."/>
            <person name="Sonstegard T.S."/>
            <person name="Keele J.W."/>
            <person name="Heaton M.P."/>
            <person name="Clawson M.L."/>
            <person name="Snelling W.M."/>
            <person name="Wiedmann R.T."/>
            <person name="Van Tassell C.P."/>
            <person name="Smith T.P.L."/>
        </authorList>
    </citation>
    <scope>NUCLEOTIDE SEQUENCE [LARGE SCALE MRNA]</scope>
</reference>
<reference key="2">
    <citation type="submission" date="2007-06" db="EMBL/GenBank/DDBJ databases">
        <authorList>
            <consortium name="NIH - Mammalian Gene Collection (MGC) project"/>
        </authorList>
    </citation>
    <scope>NUCLEOTIDE SEQUENCE [LARGE SCALE MRNA]</scope>
    <source>
        <strain>Hereford</strain>
        <tissue>Fetal liver</tissue>
    </source>
</reference>
<accession>Q1JPA0</accession>
<accession>A6QLG7</accession>
<dbReference type="EC" id="1.2.1.28" evidence="2"/>
<dbReference type="EC" id="1.2.1.5" evidence="2"/>
<dbReference type="EC" id="1.2.1.7" evidence="2"/>
<dbReference type="EC" id="1.2.1.48" evidence="2"/>
<dbReference type="EMBL" id="BT025453">
    <property type="protein sequence ID" value="ABF57409.1"/>
    <property type="molecule type" value="mRNA"/>
</dbReference>
<dbReference type="EMBL" id="BT026328">
    <property type="protein sequence ID" value="ABG81484.1"/>
    <property type="molecule type" value="mRNA"/>
</dbReference>
<dbReference type="EMBL" id="BC147958">
    <property type="protein sequence ID" value="AAI47959.1"/>
    <property type="molecule type" value="mRNA"/>
</dbReference>
<dbReference type="RefSeq" id="NP_001068986.1">
    <property type="nucleotide sequence ID" value="NM_001075518.1"/>
</dbReference>
<dbReference type="RefSeq" id="XP_005227117.2">
    <property type="nucleotide sequence ID" value="XM_005227060.5"/>
</dbReference>
<dbReference type="RefSeq" id="XP_005227118.1">
    <property type="nucleotide sequence ID" value="XM_005227061.5"/>
</dbReference>
<dbReference type="RefSeq" id="XP_005227119.1">
    <property type="nucleotide sequence ID" value="XM_005227062.5"/>
</dbReference>
<dbReference type="SMR" id="Q1JPA0"/>
<dbReference type="FunCoup" id="Q1JPA0">
    <property type="interactions" value="827"/>
</dbReference>
<dbReference type="STRING" id="9913.ENSBTAP00000042081"/>
<dbReference type="PaxDb" id="9913-ENSBTAP00000042081"/>
<dbReference type="PeptideAtlas" id="Q1JPA0"/>
<dbReference type="GeneID" id="511469"/>
<dbReference type="KEGG" id="bta:511469"/>
<dbReference type="CTD" id="221"/>
<dbReference type="VEuPathDB" id="HostDB:ENSBTAG00000013093"/>
<dbReference type="eggNOG" id="KOG2456">
    <property type="taxonomic scope" value="Eukaryota"/>
</dbReference>
<dbReference type="HOGENOM" id="CLU_005391_3_0_1"/>
<dbReference type="InParanoid" id="Q1JPA0"/>
<dbReference type="OMA" id="MKDQKVP"/>
<dbReference type="OrthoDB" id="440325at2759"/>
<dbReference type="TreeFam" id="TF314264"/>
<dbReference type="Reactome" id="R-BTA-6798695">
    <property type="pathway name" value="Neutrophil degranulation"/>
</dbReference>
<dbReference type="Reactome" id="R-BTA-9845614">
    <property type="pathway name" value="Sphingolipid catabolism"/>
</dbReference>
<dbReference type="UniPathway" id="UPA00780">
    <property type="reaction ID" value="UER00768"/>
</dbReference>
<dbReference type="Proteomes" id="UP000009136">
    <property type="component" value="Chromosome 29"/>
</dbReference>
<dbReference type="Bgee" id="ENSBTAG00000013093">
    <property type="expression patterns" value="Expressed in uterine cervix and 102 other cell types or tissues"/>
</dbReference>
<dbReference type="GO" id="GO:0005737">
    <property type="term" value="C:cytoplasm"/>
    <property type="evidence" value="ECO:0000318"/>
    <property type="project" value="GO_Central"/>
</dbReference>
<dbReference type="GO" id="GO:0005886">
    <property type="term" value="C:plasma membrane"/>
    <property type="evidence" value="ECO:0007669"/>
    <property type="project" value="UniProtKB-SubCell"/>
</dbReference>
<dbReference type="GO" id="GO:0004028">
    <property type="term" value="F:3-chloroallyl aldehyde dehydrogenase activity"/>
    <property type="evidence" value="ECO:0000318"/>
    <property type="project" value="GO_Central"/>
</dbReference>
<dbReference type="GO" id="GO:0004029">
    <property type="term" value="F:aldehyde dehydrogenase (NAD+) activity"/>
    <property type="evidence" value="ECO:0000318"/>
    <property type="project" value="GO_Central"/>
</dbReference>
<dbReference type="GO" id="GO:0018479">
    <property type="term" value="F:benzaldehyde dehydrogenase (NAD+) activity"/>
    <property type="evidence" value="ECO:0007669"/>
    <property type="project" value="UniProtKB-EC"/>
</dbReference>
<dbReference type="GO" id="GO:0018477">
    <property type="term" value="F:benzaldehyde dehydrogenase (NADP+) activity"/>
    <property type="evidence" value="ECO:0007669"/>
    <property type="project" value="UniProtKB-EC"/>
</dbReference>
<dbReference type="GO" id="GO:0050061">
    <property type="term" value="F:long-chain fatty aldehyde dehydrogenase (NAD+) activity"/>
    <property type="evidence" value="ECO:0007669"/>
    <property type="project" value="RHEA"/>
</dbReference>
<dbReference type="GO" id="GO:0052814">
    <property type="term" value="F:medium-chain fatty aldehyde dehydrogenase (NAD+) activity"/>
    <property type="evidence" value="ECO:0007669"/>
    <property type="project" value="RHEA"/>
</dbReference>
<dbReference type="GO" id="GO:0006081">
    <property type="term" value="P:aldehyde metabolic process"/>
    <property type="evidence" value="ECO:0000318"/>
    <property type="project" value="GO_Central"/>
</dbReference>
<dbReference type="GO" id="GO:0006068">
    <property type="term" value="P:ethanol catabolic process"/>
    <property type="evidence" value="ECO:0007669"/>
    <property type="project" value="UniProtKB-UniPathway"/>
</dbReference>
<dbReference type="GO" id="GO:0006629">
    <property type="term" value="P:lipid metabolic process"/>
    <property type="evidence" value="ECO:0007669"/>
    <property type="project" value="UniProtKB-KW"/>
</dbReference>
<dbReference type="CDD" id="cd07132">
    <property type="entry name" value="ALDH_F3AB"/>
    <property type="match status" value="1"/>
</dbReference>
<dbReference type="FunFam" id="3.40.309.10:FF:000003">
    <property type="entry name" value="Aldehyde dehydrogenase"/>
    <property type="match status" value="1"/>
</dbReference>
<dbReference type="FunFam" id="3.40.605.10:FF:000004">
    <property type="entry name" value="Aldehyde dehydrogenase"/>
    <property type="match status" value="1"/>
</dbReference>
<dbReference type="Gene3D" id="3.40.605.10">
    <property type="entry name" value="Aldehyde Dehydrogenase, Chain A, domain 1"/>
    <property type="match status" value="1"/>
</dbReference>
<dbReference type="Gene3D" id="3.40.309.10">
    <property type="entry name" value="Aldehyde Dehydrogenase, Chain A, domain 2"/>
    <property type="match status" value="1"/>
</dbReference>
<dbReference type="InterPro" id="IPR016161">
    <property type="entry name" value="Ald_DH/histidinol_DH"/>
</dbReference>
<dbReference type="InterPro" id="IPR016163">
    <property type="entry name" value="Ald_DH_C"/>
</dbReference>
<dbReference type="InterPro" id="IPR029510">
    <property type="entry name" value="Ald_DH_CS_GLU"/>
</dbReference>
<dbReference type="InterPro" id="IPR016162">
    <property type="entry name" value="Ald_DH_N"/>
</dbReference>
<dbReference type="InterPro" id="IPR015590">
    <property type="entry name" value="Aldehyde_DH_dom"/>
</dbReference>
<dbReference type="InterPro" id="IPR012394">
    <property type="entry name" value="Aldehyde_DH_NAD(P)"/>
</dbReference>
<dbReference type="PANTHER" id="PTHR43570">
    <property type="entry name" value="ALDEHYDE DEHYDROGENASE"/>
    <property type="match status" value="1"/>
</dbReference>
<dbReference type="PANTHER" id="PTHR43570:SF2">
    <property type="entry name" value="ALDEHYDE DEHYDROGENASE FAMILY 3 MEMBER B1"/>
    <property type="match status" value="1"/>
</dbReference>
<dbReference type="Pfam" id="PF00171">
    <property type="entry name" value="Aldedh"/>
    <property type="match status" value="1"/>
</dbReference>
<dbReference type="PIRSF" id="PIRSF036492">
    <property type="entry name" value="ALDH"/>
    <property type="match status" value="1"/>
</dbReference>
<dbReference type="SUPFAM" id="SSF53720">
    <property type="entry name" value="ALDH-like"/>
    <property type="match status" value="1"/>
</dbReference>
<dbReference type="PROSITE" id="PS00687">
    <property type="entry name" value="ALDEHYDE_DEHYDR_GLU"/>
    <property type="match status" value="1"/>
</dbReference>
<organism>
    <name type="scientific">Bos taurus</name>
    <name type="common">Bovine</name>
    <dbReference type="NCBI Taxonomy" id="9913"/>
    <lineage>
        <taxon>Eukaryota</taxon>
        <taxon>Metazoa</taxon>
        <taxon>Chordata</taxon>
        <taxon>Craniata</taxon>
        <taxon>Vertebrata</taxon>
        <taxon>Euteleostomi</taxon>
        <taxon>Mammalia</taxon>
        <taxon>Eutheria</taxon>
        <taxon>Laurasiatheria</taxon>
        <taxon>Artiodactyla</taxon>
        <taxon>Ruminantia</taxon>
        <taxon>Pecora</taxon>
        <taxon>Bovidae</taxon>
        <taxon>Bovinae</taxon>
        <taxon>Bos</taxon>
    </lineage>
</organism>
<proteinExistence type="evidence at transcript level"/>
<gene>
    <name type="primary">ALDH3B1</name>
</gene>
<keyword id="KW-0007">Acetylation</keyword>
<keyword id="KW-1003">Cell membrane</keyword>
<keyword id="KW-0443">Lipid metabolism</keyword>
<keyword id="KW-0449">Lipoprotein</keyword>
<keyword id="KW-0472">Membrane</keyword>
<keyword id="KW-0488">Methylation</keyword>
<keyword id="KW-0520">NAD</keyword>
<keyword id="KW-0560">Oxidoreductase</keyword>
<keyword id="KW-0564">Palmitate</keyword>
<keyword id="KW-0636">Prenylation</keyword>
<keyword id="KW-1185">Reference proteome</keyword>
<name>AL3B1_BOVIN</name>
<comment type="function">
    <text evidence="2">Oxidizes medium and long chain saturated and unsaturated fatty aldehydes generated in the plasma membrane into non-toxic fatty acids. May have a protective role against the cytotoxicity induced by lipid peroxidation. Short-chain fatty aldehydes are not good substrates. Can use both NADP(+) and NAD(+) as electron acceptor in vitro, however in vivo preference will depend on their tissue levels. Low activity towards acetaldehyde and 3,4-dihydroxyphenylacetaldehyde. Able to metabolize aromatic aldehydes such as benzaldehyde to their acid form.</text>
</comment>
<comment type="catalytic activity">
    <reaction evidence="2">
        <text>an aldehyde + NAD(+) + H2O = a carboxylate + NADH + 2 H(+)</text>
        <dbReference type="Rhea" id="RHEA:16185"/>
        <dbReference type="ChEBI" id="CHEBI:15377"/>
        <dbReference type="ChEBI" id="CHEBI:15378"/>
        <dbReference type="ChEBI" id="CHEBI:17478"/>
        <dbReference type="ChEBI" id="CHEBI:29067"/>
        <dbReference type="ChEBI" id="CHEBI:57540"/>
        <dbReference type="ChEBI" id="CHEBI:57945"/>
        <dbReference type="EC" id="1.2.1.5"/>
    </reaction>
    <physiologicalReaction direction="left-to-right" evidence="2">
        <dbReference type="Rhea" id="RHEA:16186"/>
    </physiologicalReaction>
</comment>
<comment type="catalytic activity">
    <reaction evidence="2">
        <text>a long-chain fatty aldehyde + NAD(+) + H2O = a long-chain fatty acid + NADH + 2 H(+)</text>
        <dbReference type="Rhea" id="RHEA:10652"/>
        <dbReference type="ChEBI" id="CHEBI:15377"/>
        <dbReference type="ChEBI" id="CHEBI:15378"/>
        <dbReference type="ChEBI" id="CHEBI:17176"/>
        <dbReference type="ChEBI" id="CHEBI:57540"/>
        <dbReference type="ChEBI" id="CHEBI:57560"/>
        <dbReference type="ChEBI" id="CHEBI:57945"/>
        <dbReference type="EC" id="1.2.1.48"/>
    </reaction>
    <physiologicalReaction direction="left-to-right" evidence="2">
        <dbReference type="Rhea" id="RHEA:10653"/>
    </physiologicalReaction>
</comment>
<comment type="catalytic activity">
    <reaction evidence="2">
        <text>a medium-chain fatty aldehyde + NAD(+) + H2O = a medium-chain fatty acid + NADH + 2 H(+)</text>
        <dbReference type="Rhea" id="RHEA:69763"/>
        <dbReference type="ChEBI" id="CHEBI:15377"/>
        <dbReference type="ChEBI" id="CHEBI:15378"/>
        <dbReference type="ChEBI" id="CHEBI:57540"/>
        <dbReference type="ChEBI" id="CHEBI:57945"/>
        <dbReference type="ChEBI" id="CHEBI:59558"/>
        <dbReference type="ChEBI" id="CHEBI:142621"/>
    </reaction>
    <physiologicalReaction direction="left-to-right" evidence="2">
        <dbReference type="Rhea" id="RHEA:69764"/>
    </physiologicalReaction>
</comment>
<comment type="catalytic activity">
    <reaction evidence="2">
        <text>octanal + NAD(+) + H2O = octanoate + NADH + 2 H(+)</text>
        <dbReference type="Rhea" id="RHEA:44100"/>
        <dbReference type="ChEBI" id="CHEBI:15377"/>
        <dbReference type="ChEBI" id="CHEBI:15378"/>
        <dbReference type="ChEBI" id="CHEBI:17935"/>
        <dbReference type="ChEBI" id="CHEBI:25646"/>
        <dbReference type="ChEBI" id="CHEBI:57540"/>
        <dbReference type="ChEBI" id="CHEBI:57945"/>
    </reaction>
    <physiologicalReaction direction="left-to-right" evidence="2">
        <dbReference type="Rhea" id="RHEA:44101"/>
    </physiologicalReaction>
</comment>
<comment type="catalytic activity">
    <reaction evidence="2">
        <text>nonanal + NAD(+) + H2O = nonanoate + NADH + 2 H(+)</text>
        <dbReference type="Rhea" id="RHEA:69759"/>
        <dbReference type="ChEBI" id="CHEBI:15377"/>
        <dbReference type="ChEBI" id="CHEBI:15378"/>
        <dbReference type="ChEBI" id="CHEBI:32361"/>
        <dbReference type="ChEBI" id="CHEBI:57540"/>
        <dbReference type="ChEBI" id="CHEBI:57945"/>
        <dbReference type="ChEBI" id="CHEBI:84268"/>
    </reaction>
    <physiologicalReaction direction="left-to-right" evidence="2">
        <dbReference type="Rhea" id="RHEA:69760"/>
    </physiologicalReaction>
</comment>
<comment type="catalytic activity">
    <reaction evidence="2">
        <text>hexadecanoate + NADH + 2 H(+) = hexadecanal + NAD(+) + H2O</text>
        <dbReference type="Rhea" id="RHEA:33739"/>
        <dbReference type="ChEBI" id="CHEBI:7896"/>
        <dbReference type="ChEBI" id="CHEBI:15377"/>
        <dbReference type="ChEBI" id="CHEBI:15378"/>
        <dbReference type="ChEBI" id="CHEBI:17600"/>
        <dbReference type="ChEBI" id="CHEBI:57540"/>
        <dbReference type="ChEBI" id="CHEBI:57945"/>
    </reaction>
    <physiologicalReaction direction="right-to-left" evidence="2">
        <dbReference type="Rhea" id="RHEA:33741"/>
    </physiologicalReaction>
</comment>
<comment type="catalytic activity">
    <reaction evidence="2">
        <text>(2E)-octenal + NAD(+) + H2O = (2E)-octenoate + NADH + 2 H(+)</text>
        <dbReference type="Rhea" id="RHEA:59920"/>
        <dbReference type="ChEBI" id="CHEBI:15377"/>
        <dbReference type="ChEBI" id="CHEBI:15378"/>
        <dbReference type="ChEBI" id="CHEBI:57540"/>
        <dbReference type="ChEBI" id="CHEBI:57945"/>
        <dbReference type="ChEBI" id="CHEBI:61748"/>
        <dbReference type="ChEBI" id="CHEBI:143526"/>
    </reaction>
    <physiologicalReaction direction="left-to-right" evidence="2">
        <dbReference type="Rhea" id="RHEA:59921"/>
    </physiologicalReaction>
</comment>
<comment type="catalytic activity">
    <reaction evidence="2">
        <text>(E)-non-2-enal + NAD(+) + H2O = (E)-non-2-enoate + NADH + 2 H(+)</text>
        <dbReference type="Rhea" id="RHEA:69767"/>
        <dbReference type="ChEBI" id="CHEBI:15377"/>
        <dbReference type="ChEBI" id="CHEBI:15378"/>
        <dbReference type="ChEBI" id="CHEBI:57540"/>
        <dbReference type="ChEBI" id="CHEBI:57945"/>
        <dbReference type="ChEBI" id="CHEBI:142592"/>
        <dbReference type="ChEBI" id="CHEBI:143908"/>
    </reaction>
    <physiologicalReaction direction="left-to-right" evidence="2">
        <dbReference type="Rhea" id="RHEA:69768"/>
    </physiologicalReaction>
</comment>
<comment type="catalytic activity">
    <reaction evidence="2">
        <text>(E)-4-hydroxynon-2-enal + NAD(+) + H2O = (E)-4-hydroxynon-2-enoate + NADH + 2 H(+)</text>
        <dbReference type="Rhea" id="RHEA:67248"/>
        <dbReference type="ChEBI" id="CHEBI:15377"/>
        <dbReference type="ChEBI" id="CHEBI:15378"/>
        <dbReference type="ChEBI" id="CHEBI:57540"/>
        <dbReference type="ChEBI" id="CHEBI:57945"/>
        <dbReference type="ChEBI" id="CHEBI:58968"/>
        <dbReference type="ChEBI" id="CHEBI:142920"/>
    </reaction>
    <physiologicalReaction direction="left-to-right" evidence="2">
        <dbReference type="Rhea" id="RHEA:67249"/>
    </physiologicalReaction>
</comment>
<comment type="catalytic activity">
    <reaction evidence="2">
        <text>(2E)-hexadecenal + NAD(+) + H2O = (E)-hexadec-2-enoate + NADH + 2 H(+)</text>
        <dbReference type="Rhea" id="RHEA:36135"/>
        <dbReference type="ChEBI" id="CHEBI:15377"/>
        <dbReference type="ChEBI" id="CHEBI:15378"/>
        <dbReference type="ChEBI" id="CHEBI:17585"/>
        <dbReference type="ChEBI" id="CHEBI:57540"/>
        <dbReference type="ChEBI" id="CHEBI:57945"/>
        <dbReference type="ChEBI" id="CHEBI:72745"/>
    </reaction>
    <physiologicalReaction direction="left-to-right" evidence="2">
        <dbReference type="Rhea" id="RHEA:36136"/>
    </physiologicalReaction>
</comment>
<comment type="catalytic activity">
    <reaction evidence="2">
        <text>benzaldehyde + NAD(+) + H2O = benzoate + NADH + 2 H(+)</text>
        <dbReference type="Rhea" id="RHEA:11840"/>
        <dbReference type="ChEBI" id="CHEBI:15377"/>
        <dbReference type="ChEBI" id="CHEBI:15378"/>
        <dbReference type="ChEBI" id="CHEBI:16150"/>
        <dbReference type="ChEBI" id="CHEBI:17169"/>
        <dbReference type="ChEBI" id="CHEBI:57540"/>
        <dbReference type="ChEBI" id="CHEBI:57945"/>
        <dbReference type="EC" id="1.2.1.28"/>
    </reaction>
    <physiologicalReaction direction="left-to-right" evidence="2">
        <dbReference type="Rhea" id="RHEA:11841"/>
    </physiologicalReaction>
</comment>
<comment type="catalytic activity">
    <reaction evidence="2">
        <text>an aldehyde + NADP(+) + H2O = a carboxylate + NADPH + 2 H(+)</text>
        <dbReference type="Rhea" id="RHEA:11888"/>
        <dbReference type="ChEBI" id="CHEBI:15377"/>
        <dbReference type="ChEBI" id="CHEBI:15378"/>
        <dbReference type="ChEBI" id="CHEBI:17478"/>
        <dbReference type="ChEBI" id="CHEBI:29067"/>
        <dbReference type="ChEBI" id="CHEBI:57783"/>
        <dbReference type="ChEBI" id="CHEBI:58349"/>
        <dbReference type="EC" id="1.2.1.5"/>
    </reaction>
    <physiologicalReaction direction="left-to-right" evidence="2">
        <dbReference type="Rhea" id="RHEA:11889"/>
    </physiologicalReaction>
</comment>
<comment type="catalytic activity">
    <reaction evidence="2">
        <text>a medium-chain fatty aldehyde + NADP(+) + H2O = a medium-chain fatty acid + NADPH + 2 H(+)</text>
        <dbReference type="Rhea" id="RHEA:80815"/>
        <dbReference type="ChEBI" id="CHEBI:15377"/>
        <dbReference type="ChEBI" id="CHEBI:15378"/>
        <dbReference type="ChEBI" id="CHEBI:57783"/>
        <dbReference type="ChEBI" id="CHEBI:58349"/>
        <dbReference type="ChEBI" id="CHEBI:59558"/>
        <dbReference type="ChEBI" id="CHEBI:142621"/>
    </reaction>
    <physiologicalReaction direction="left-to-right" evidence="2">
        <dbReference type="Rhea" id="RHEA:80816"/>
    </physiologicalReaction>
</comment>
<comment type="catalytic activity">
    <reaction evidence="2">
        <text>hexanal + NADP(+) + H2O = hexanoate + NADPH + 2 H(+)</text>
        <dbReference type="Rhea" id="RHEA:59908"/>
        <dbReference type="ChEBI" id="CHEBI:15377"/>
        <dbReference type="ChEBI" id="CHEBI:15378"/>
        <dbReference type="ChEBI" id="CHEBI:17120"/>
        <dbReference type="ChEBI" id="CHEBI:57783"/>
        <dbReference type="ChEBI" id="CHEBI:58349"/>
        <dbReference type="ChEBI" id="CHEBI:88528"/>
    </reaction>
    <physiologicalReaction direction="left-to-right" evidence="2">
        <dbReference type="Rhea" id="RHEA:59909"/>
    </physiologicalReaction>
</comment>
<comment type="catalytic activity">
    <reaction evidence="2">
        <text>octanal + NADP(+) + H2O = octanoate + NADPH + 2 H(+)</text>
        <dbReference type="Rhea" id="RHEA:59904"/>
        <dbReference type="ChEBI" id="CHEBI:15377"/>
        <dbReference type="ChEBI" id="CHEBI:15378"/>
        <dbReference type="ChEBI" id="CHEBI:17935"/>
        <dbReference type="ChEBI" id="CHEBI:25646"/>
        <dbReference type="ChEBI" id="CHEBI:57783"/>
        <dbReference type="ChEBI" id="CHEBI:58349"/>
    </reaction>
    <physiologicalReaction direction="left-to-right" evidence="2">
        <dbReference type="Rhea" id="RHEA:59905"/>
    </physiologicalReaction>
</comment>
<comment type="catalytic activity">
    <reaction evidence="2">
        <text>nonanal + NADP(+) + H2O = nonanoate + NADPH + 2 H(+)</text>
        <dbReference type="Rhea" id="RHEA:80819"/>
        <dbReference type="ChEBI" id="CHEBI:15377"/>
        <dbReference type="ChEBI" id="CHEBI:15378"/>
        <dbReference type="ChEBI" id="CHEBI:32361"/>
        <dbReference type="ChEBI" id="CHEBI:57783"/>
        <dbReference type="ChEBI" id="CHEBI:58349"/>
        <dbReference type="ChEBI" id="CHEBI:84268"/>
    </reaction>
    <physiologicalReaction direction="left-to-right" evidence="2">
        <dbReference type="Rhea" id="RHEA:80820"/>
    </physiologicalReaction>
</comment>
<comment type="catalytic activity">
    <reaction evidence="2">
        <text>(2E)-octenal + NADP(+) + H2O = (2E)-octenoate + NADPH + 2 H(+)</text>
        <dbReference type="Rhea" id="RHEA:59916"/>
        <dbReference type="ChEBI" id="CHEBI:15377"/>
        <dbReference type="ChEBI" id="CHEBI:15378"/>
        <dbReference type="ChEBI" id="CHEBI:57783"/>
        <dbReference type="ChEBI" id="CHEBI:58349"/>
        <dbReference type="ChEBI" id="CHEBI:61748"/>
        <dbReference type="ChEBI" id="CHEBI:143526"/>
    </reaction>
    <physiologicalReaction direction="left-to-right" evidence="2">
        <dbReference type="Rhea" id="RHEA:59917"/>
    </physiologicalReaction>
</comment>
<comment type="catalytic activity">
    <reaction evidence="2">
        <text>(E)-non-2-enal + NADP(+) + H2O = (E)-non-2-enoate + NADPH + 2 H(+)</text>
        <dbReference type="Rhea" id="RHEA:60692"/>
        <dbReference type="ChEBI" id="CHEBI:15377"/>
        <dbReference type="ChEBI" id="CHEBI:15378"/>
        <dbReference type="ChEBI" id="CHEBI:57783"/>
        <dbReference type="ChEBI" id="CHEBI:58349"/>
        <dbReference type="ChEBI" id="CHEBI:142592"/>
        <dbReference type="ChEBI" id="CHEBI:143908"/>
    </reaction>
    <physiologicalReaction direction="left-to-right" evidence="2">
        <dbReference type="Rhea" id="RHEA:60693"/>
    </physiologicalReaction>
</comment>
<comment type="catalytic activity">
    <reaction evidence="2">
        <text>(E)-4-hydroxynon-2-enal + NADP(+) + H2O = (E)-4-hydroxynon-2-enoate + NADPH + 2 H(+)</text>
        <dbReference type="Rhea" id="RHEA:59912"/>
        <dbReference type="ChEBI" id="CHEBI:15377"/>
        <dbReference type="ChEBI" id="CHEBI:15378"/>
        <dbReference type="ChEBI" id="CHEBI:57783"/>
        <dbReference type="ChEBI" id="CHEBI:58349"/>
        <dbReference type="ChEBI" id="CHEBI:58968"/>
        <dbReference type="ChEBI" id="CHEBI:142920"/>
    </reaction>
    <physiologicalReaction direction="left-to-right" evidence="2">
        <dbReference type="Rhea" id="RHEA:59913"/>
    </physiologicalReaction>
</comment>
<comment type="catalytic activity">
    <reaction evidence="2">
        <text>benzaldehyde + NADP(+) + H2O = benzoate + NADPH + 2 H(+)</text>
        <dbReference type="Rhea" id="RHEA:21660"/>
        <dbReference type="ChEBI" id="CHEBI:15377"/>
        <dbReference type="ChEBI" id="CHEBI:15378"/>
        <dbReference type="ChEBI" id="CHEBI:16150"/>
        <dbReference type="ChEBI" id="CHEBI:17169"/>
        <dbReference type="ChEBI" id="CHEBI:57783"/>
        <dbReference type="ChEBI" id="CHEBI:58349"/>
        <dbReference type="EC" id="1.2.1.7"/>
    </reaction>
    <physiologicalReaction direction="left-to-right" evidence="2">
        <dbReference type="Rhea" id="RHEA:21661"/>
    </physiologicalReaction>
</comment>
<comment type="pathway">
    <text>Alcohol metabolism; ethanol degradation; acetate from ethanol: step 2/2.</text>
</comment>
<comment type="subcellular location">
    <subcellularLocation>
        <location evidence="1">Cell membrane</location>
        <topology evidence="1">Lipid-anchor</topology>
    </subcellularLocation>
    <text evidence="1">Primarily in the plasma membrane as well as in some punctate structures in the cytoplasm.</text>
</comment>
<comment type="PTM">
    <text evidence="3">Dually lipidated in the C-terminus; prenylation occurs prior to, and is a prerequisite for palmitoylation. It is also required for activity towards long-chain substrates.</text>
</comment>
<comment type="similarity">
    <text evidence="5">Belongs to the aldehyde dehydrogenase family.</text>
</comment>
<evidence type="ECO:0000250" key="1"/>
<evidence type="ECO:0000250" key="2">
    <source>
        <dbReference type="UniProtKB" id="P43353"/>
    </source>
</evidence>
<evidence type="ECO:0000250" key="3">
    <source>
        <dbReference type="UniProtKB" id="Q80VQ0"/>
    </source>
</evidence>
<evidence type="ECO:0000255" key="4">
    <source>
        <dbReference type="PROSITE-ProRule" id="PRU10007"/>
    </source>
</evidence>
<evidence type="ECO:0000305" key="5"/>
<feature type="chain" id="PRO_0000259960" description="Aldehyde dehydrogenase family 3 member B1">
    <location>
        <begin position="1"/>
        <end position="465"/>
    </location>
</feature>
<feature type="propeptide" id="PRO_0000424192" description="Removed in mature form" evidence="5">
    <location>
        <begin position="466"/>
        <end position="468"/>
    </location>
</feature>
<feature type="active site" evidence="4">
    <location>
        <position position="210"/>
    </location>
</feature>
<feature type="active site" evidence="4">
    <location>
        <position position="244"/>
    </location>
</feature>
<feature type="binding site" evidence="1">
    <location>
        <begin position="188"/>
        <end position="193"/>
    </location>
    <ligand>
        <name>NAD(+)</name>
        <dbReference type="ChEBI" id="CHEBI:57540"/>
    </ligand>
</feature>
<feature type="modified residue" description="N-acetylmethionine" evidence="2">
    <location>
        <position position="1"/>
    </location>
</feature>
<feature type="modified residue" description="Cysteine methyl ester" evidence="5">
    <location>
        <position position="465"/>
    </location>
</feature>
<feature type="lipid moiety-binding region" description="S-palmitoyl cysteine" evidence="2">
    <location>
        <position position="463"/>
    </location>
</feature>
<feature type="lipid moiety-binding region" description="S-geranylgeranyl cysteine" evidence="2">
    <location>
        <position position="465"/>
    </location>
</feature>
<feature type="sequence conflict" description="In Ref. 2; AAI47959." evidence="5" ref="2">
    <original>D</original>
    <variation>A</variation>
    <location>
        <position position="27"/>
    </location>
</feature>
<feature type="sequence conflict" description="In Ref. 2; AAI47959." evidence="5" ref="2">
    <original>I</original>
    <variation>T</variation>
    <location>
        <position position="66"/>
    </location>
</feature>